<accession>B7L4T9</accession>
<sequence>MNNIWWQTKGQGNVHLVLLHGWGLNAEVWRCIDEELSSHFTLHLVDLPGFGRSRGFGALSLADMAEAVLQQAPDKAIWLGWSLGGLVASQIVLTHPERVQALVTVASSPCFSARDEWPGIKPDVLAGFQQQLSDDFQRTVERFLALQTMGTETARQDARALKKTVLALPMPEVDVLNGGLEILKTVDLRQPLQNVSMPFLRLYGYLDGLVPRKVVPMLDKLWPHSESYIFAKAAHAPFISHPVEFCHLLVALKQRV</sequence>
<gene>
    <name evidence="2" type="primary">bioH</name>
    <name type="ordered locus">EC55989_3820</name>
</gene>
<keyword id="KW-0093">Biotin biosynthesis</keyword>
<keyword id="KW-0963">Cytoplasm</keyword>
<keyword id="KW-0378">Hydrolase</keyword>
<keyword id="KW-1185">Reference proteome</keyword>
<keyword id="KW-0719">Serine esterase</keyword>
<feature type="chain" id="PRO_1000165114" description="Pimeloyl-[acyl-carrier protein] methyl ester esterase">
    <location>
        <begin position="1"/>
        <end position="256"/>
    </location>
</feature>
<feature type="domain" description="AB hydrolase-1" evidence="1">
    <location>
        <begin position="15"/>
        <end position="242"/>
    </location>
</feature>
<feature type="active site" description="Nucleophile" evidence="2">
    <location>
        <position position="82"/>
    </location>
</feature>
<feature type="active site" evidence="2">
    <location>
        <position position="207"/>
    </location>
</feature>
<feature type="active site" evidence="2">
    <location>
        <position position="235"/>
    </location>
</feature>
<feature type="binding site" evidence="2">
    <location>
        <position position="22"/>
    </location>
    <ligand>
        <name>substrate</name>
    </ligand>
</feature>
<feature type="binding site" evidence="2">
    <location>
        <begin position="82"/>
        <end position="83"/>
    </location>
    <ligand>
        <name>substrate</name>
    </ligand>
</feature>
<feature type="binding site" evidence="2">
    <location>
        <begin position="143"/>
        <end position="147"/>
    </location>
    <ligand>
        <name>substrate</name>
    </ligand>
</feature>
<feature type="binding site" evidence="2">
    <location>
        <position position="235"/>
    </location>
    <ligand>
        <name>substrate</name>
    </ligand>
</feature>
<name>BIOH_ECO55</name>
<dbReference type="EC" id="3.1.1.85" evidence="2"/>
<dbReference type="EMBL" id="CU928145">
    <property type="protein sequence ID" value="CAV00183.1"/>
    <property type="molecule type" value="Genomic_DNA"/>
</dbReference>
<dbReference type="RefSeq" id="WP_001060076.1">
    <property type="nucleotide sequence ID" value="NC_011748.1"/>
</dbReference>
<dbReference type="SMR" id="B7L4T9"/>
<dbReference type="ESTHER" id="ecoli-bioh">
    <property type="family name" value="BioH"/>
</dbReference>
<dbReference type="MEROPS" id="S33.994"/>
<dbReference type="KEGG" id="eck:EC55989_3820"/>
<dbReference type="HOGENOM" id="CLU_020336_12_2_6"/>
<dbReference type="UniPathway" id="UPA00078"/>
<dbReference type="Proteomes" id="UP000000746">
    <property type="component" value="Chromosome"/>
</dbReference>
<dbReference type="GO" id="GO:0005737">
    <property type="term" value="C:cytoplasm"/>
    <property type="evidence" value="ECO:0007669"/>
    <property type="project" value="UniProtKB-SubCell"/>
</dbReference>
<dbReference type="GO" id="GO:0090499">
    <property type="term" value="F:pimelyl-[acyl-carrier protein] methyl ester esterase activity"/>
    <property type="evidence" value="ECO:0007669"/>
    <property type="project" value="UniProtKB-EC"/>
</dbReference>
<dbReference type="GO" id="GO:0009102">
    <property type="term" value="P:biotin biosynthetic process"/>
    <property type="evidence" value="ECO:0007669"/>
    <property type="project" value="UniProtKB-UniRule"/>
</dbReference>
<dbReference type="FunFam" id="3.40.50.1820:FF:000045">
    <property type="entry name" value="Pimeloyl-[acyl-carrier protein] methyl ester esterase"/>
    <property type="match status" value="1"/>
</dbReference>
<dbReference type="Gene3D" id="3.40.50.1820">
    <property type="entry name" value="alpha/beta hydrolase"/>
    <property type="match status" value="1"/>
</dbReference>
<dbReference type="HAMAP" id="MF_01260">
    <property type="entry name" value="Carboxylester"/>
    <property type="match status" value="1"/>
</dbReference>
<dbReference type="InterPro" id="IPR000073">
    <property type="entry name" value="AB_hydrolase_1"/>
</dbReference>
<dbReference type="InterPro" id="IPR029058">
    <property type="entry name" value="AB_hydrolase_fold"/>
</dbReference>
<dbReference type="InterPro" id="IPR010076">
    <property type="entry name" value="BioH"/>
</dbReference>
<dbReference type="InterPro" id="IPR050228">
    <property type="entry name" value="Carboxylesterase_BioH"/>
</dbReference>
<dbReference type="NCBIfam" id="TIGR01738">
    <property type="entry name" value="bioH"/>
    <property type="match status" value="1"/>
</dbReference>
<dbReference type="NCBIfam" id="NF007674">
    <property type="entry name" value="PRK10349.1"/>
    <property type="match status" value="1"/>
</dbReference>
<dbReference type="PANTHER" id="PTHR43194">
    <property type="entry name" value="HYDROLASE ALPHA/BETA FOLD FAMILY"/>
    <property type="match status" value="1"/>
</dbReference>
<dbReference type="PANTHER" id="PTHR43194:SF5">
    <property type="entry name" value="PIMELOYL-[ACYL-CARRIER PROTEIN] METHYL ESTER ESTERASE"/>
    <property type="match status" value="1"/>
</dbReference>
<dbReference type="Pfam" id="PF00561">
    <property type="entry name" value="Abhydrolase_1"/>
    <property type="match status" value="1"/>
</dbReference>
<dbReference type="SUPFAM" id="SSF53474">
    <property type="entry name" value="alpha/beta-Hydrolases"/>
    <property type="match status" value="1"/>
</dbReference>
<evidence type="ECO:0000255" key="1"/>
<evidence type="ECO:0000255" key="2">
    <source>
        <dbReference type="HAMAP-Rule" id="MF_01260"/>
    </source>
</evidence>
<reference key="1">
    <citation type="journal article" date="2009" name="PLoS Genet.">
        <title>Organised genome dynamics in the Escherichia coli species results in highly diverse adaptive paths.</title>
        <authorList>
            <person name="Touchon M."/>
            <person name="Hoede C."/>
            <person name="Tenaillon O."/>
            <person name="Barbe V."/>
            <person name="Baeriswyl S."/>
            <person name="Bidet P."/>
            <person name="Bingen E."/>
            <person name="Bonacorsi S."/>
            <person name="Bouchier C."/>
            <person name="Bouvet O."/>
            <person name="Calteau A."/>
            <person name="Chiapello H."/>
            <person name="Clermont O."/>
            <person name="Cruveiller S."/>
            <person name="Danchin A."/>
            <person name="Diard M."/>
            <person name="Dossat C."/>
            <person name="Karoui M.E."/>
            <person name="Frapy E."/>
            <person name="Garry L."/>
            <person name="Ghigo J.M."/>
            <person name="Gilles A.M."/>
            <person name="Johnson J."/>
            <person name="Le Bouguenec C."/>
            <person name="Lescat M."/>
            <person name="Mangenot S."/>
            <person name="Martinez-Jehanne V."/>
            <person name="Matic I."/>
            <person name="Nassif X."/>
            <person name="Oztas S."/>
            <person name="Petit M.A."/>
            <person name="Pichon C."/>
            <person name="Rouy Z."/>
            <person name="Ruf C.S."/>
            <person name="Schneider D."/>
            <person name="Tourret J."/>
            <person name="Vacherie B."/>
            <person name="Vallenet D."/>
            <person name="Medigue C."/>
            <person name="Rocha E.P.C."/>
            <person name="Denamur E."/>
        </authorList>
    </citation>
    <scope>NUCLEOTIDE SEQUENCE [LARGE SCALE GENOMIC DNA]</scope>
    <source>
        <strain>55989 / EAEC</strain>
    </source>
</reference>
<organism>
    <name type="scientific">Escherichia coli (strain 55989 / EAEC)</name>
    <dbReference type="NCBI Taxonomy" id="585055"/>
    <lineage>
        <taxon>Bacteria</taxon>
        <taxon>Pseudomonadati</taxon>
        <taxon>Pseudomonadota</taxon>
        <taxon>Gammaproteobacteria</taxon>
        <taxon>Enterobacterales</taxon>
        <taxon>Enterobacteriaceae</taxon>
        <taxon>Escherichia</taxon>
    </lineage>
</organism>
<protein>
    <recommendedName>
        <fullName evidence="2">Pimeloyl-[acyl-carrier protein] methyl ester esterase</fullName>
        <ecNumber evidence="2">3.1.1.85</ecNumber>
    </recommendedName>
    <alternativeName>
        <fullName evidence="2">Biotin synthesis protein BioH</fullName>
    </alternativeName>
    <alternativeName>
        <fullName evidence="2">Carboxylesterase BioH</fullName>
    </alternativeName>
</protein>
<comment type="function">
    <text evidence="2">The physiological role of BioH is to remove the methyl group introduced by BioC when the pimeloyl moiety is complete. It allows to synthesize pimeloyl-ACP via the fatty acid synthetic pathway through the hydrolysis of the ester bonds of pimeloyl-ACP esters.</text>
</comment>
<comment type="catalytic activity">
    <reaction evidence="2">
        <text>6-carboxyhexanoyl-[ACP] methyl ester + H2O = 6-carboxyhexanoyl-[ACP] + methanol + H(+)</text>
        <dbReference type="Rhea" id="RHEA:42700"/>
        <dbReference type="Rhea" id="RHEA-COMP:9955"/>
        <dbReference type="Rhea" id="RHEA-COMP:10186"/>
        <dbReference type="ChEBI" id="CHEBI:15377"/>
        <dbReference type="ChEBI" id="CHEBI:15378"/>
        <dbReference type="ChEBI" id="CHEBI:17790"/>
        <dbReference type="ChEBI" id="CHEBI:78846"/>
        <dbReference type="ChEBI" id="CHEBI:82735"/>
        <dbReference type="EC" id="3.1.1.85"/>
    </reaction>
</comment>
<comment type="pathway">
    <text evidence="2">Cofactor biosynthesis; biotin biosynthesis.</text>
</comment>
<comment type="subunit">
    <text evidence="2">Monomer.</text>
</comment>
<comment type="subcellular location">
    <subcellularLocation>
        <location evidence="2">Cytoplasm</location>
    </subcellularLocation>
</comment>
<comment type="similarity">
    <text evidence="2">Belongs to the AB hydrolase superfamily. Carboxylesterase BioH family.</text>
</comment>
<proteinExistence type="inferred from homology"/>